<proteinExistence type="inferred from homology"/>
<name>RNH_SHEB9</name>
<comment type="function">
    <text evidence="1">Endonuclease that specifically degrades the RNA of RNA-DNA hybrids.</text>
</comment>
<comment type="catalytic activity">
    <reaction evidence="1">
        <text>Endonucleolytic cleavage to 5'-phosphomonoester.</text>
        <dbReference type="EC" id="3.1.26.4"/>
    </reaction>
</comment>
<comment type="cofactor">
    <cofactor evidence="1">
        <name>Mg(2+)</name>
        <dbReference type="ChEBI" id="CHEBI:18420"/>
    </cofactor>
    <text evidence="1">Binds 1 Mg(2+) ion per subunit. May bind a second metal ion at a regulatory site, or after substrate binding.</text>
</comment>
<comment type="subunit">
    <text evidence="1">Monomer.</text>
</comment>
<comment type="subcellular location">
    <subcellularLocation>
        <location evidence="1">Cytoplasm</location>
    </subcellularLocation>
</comment>
<comment type="similarity">
    <text evidence="1">Belongs to the RNase H family.</text>
</comment>
<sequence>MTELKLIHIFTDGSCLGNPGPGGYGIVMNYKGHTKEMSDGFALTTNNRMELLAPIIALESLKEPCQVVLTSDSQYMRQGIMTWIHGWKKKGWMTSNRTPVKNVDLWKRLDKASQMHTIDWQWVKGHAGHAENERCDVLARTAAESKPTQPDLGYQP</sequence>
<feature type="chain" id="PRO_1000074668" description="Ribonuclease H">
    <location>
        <begin position="1"/>
        <end position="156"/>
    </location>
</feature>
<feature type="domain" description="RNase H type-1" evidence="2">
    <location>
        <begin position="3"/>
        <end position="144"/>
    </location>
</feature>
<feature type="binding site" evidence="1">
    <location>
        <position position="12"/>
    </location>
    <ligand>
        <name>Mg(2+)</name>
        <dbReference type="ChEBI" id="CHEBI:18420"/>
        <label>1</label>
    </ligand>
</feature>
<feature type="binding site" evidence="1">
    <location>
        <position position="12"/>
    </location>
    <ligand>
        <name>Mg(2+)</name>
        <dbReference type="ChEBI" id="CHEBI:18420"/>
        <label>2</label>
    </ligand>
</feature>
<feature type="binding site" evidence="1">
    <location>
        <position position="50"/>
    </location>
    <ligand>
        <name>Mg(2+)</name>
        <dbReference type="ChEBI" id="CHEBI:18420"/>
        <label>1</label>
    </ligand>
</feature>
<feature type="binding site" evidence="1">
    <location>
        <position position="72"/>
    </location>
    <ligand>
        <name>Mg(2+)</name>
        <dbReference type="ChEBI" id="CHEBI:18420"/>
        <label>1</label>
    </ligand>
</feature>
<feature type="binding site" evidence="1">
    <location>
        <position position="136"/>
    </location>
    <ligand>
        <name>Mg(2+)</name>
        <dbReference type="ChEBI" id="CHEBI:18420"/>
        <label>2</label>
    </ligand>
</feature>
<keyword id="KW-0963">Cytoplasm</keyword>
<keyword id="KW-0255">Endonuclease</keyword>
<keyword id="KW-0378">Hydrolase</keyword>
<keyword id="KW-0460">Magnesium</keyword>
<keyword id="KW-0479">Metal-binding</keyword>
<keyword id="KW-0540">Nuclease</keyword>
<dbReference type="EC" id="3.1.26.4" evidence="1"/>
<dbReference type="EMBL" id="CP000891">
    <property type="protein sequence ID" value="ABX49232.1"/>
    <property type="molecule type" value="Genomic_DNA"/>
</dbReference>
<dbReference type="RefSeq" id="WP_006081489.1">
    <property type="nucleotide sequence ID" value="NC_009997.1"/>
</dbReference>
<dbReference type="SMR" id="A9L0F2"/>
<dbReference type="GeneID" id="11772215"/>
<dbReference type="KEGG" id="sbn:Sbal195_2062"/>
<dbReference type="HOGENOM" id="CLU_030894_6_0_6"/>
<dbReference type="Proteomes" id="UP000000770">
    <property type="component" value="Chromosome"/>
</dbReference>
<dbReference type="GO" id="GO:0005737">
    <property type="term" value="C:cytoplasm"/>
    <property type="evidence" value="ECO:0007669"/>
    <property type="project" value="UniProtKB-SubCell"/>
</dbReference>
<dbReference type="GO" id="GO:0000287">
    <property type="term" value="F:magnesium ion binding"/>
    <property type="evidence" value="ECO:0007669"/>
    <property type="project" value="UniProtKB-UniRule"/>
</dbReference>
<dbReference type="GO" id="GO:0003676">
    <property type="term" value="F:nucleic acid binding"/>
    <property type="evidence" value="ECO:0007669"/>
    <property type="project" value="InterPro"/>
</dbReference>
<dbReference type="GO" id="GO:0004523">
    <property type="term" value="F:RNA-DNA hybrid ribonuclease activity"/>
    <property type="evidence" value="ECO:0007669"/>
    <property type="project" value="UniProtKB-UniRule"/>
</dbReference>
<dbReference type="GO" id="GO:0043137">
    <property type="term" value="P:DNA replication, removal of RNA primer"/>
    <property type="evidence" value="ECO:0007669"/>
    <property type="project" value="TreeGrafter"/>
</dbReference>
<dbReference type="CDD" id="cd09278">
    <property type="entry name" value="RNase_HI_prokaryote_like"/>
    <property type="match status" value="1"/>
</dbReference>
<dbReference type="FunFam" id="3.30.420.10:FF:000008">
    <property type="entry name" value="Ribonuclease H"/>
    <property type="match status" value="1"/>
</dbReference>
<dbReference type="Gene3D" id="3.30.420.10">
    <property type="entry name" value="Ribonuclease H-like superfamily/Ribonuclease H"/>
    <property type="match status" value="1"/>
</dbReference>
<dbReference type="HAMAP" id="MF_00042">
    <property type="entry name" value="RNase_H"/>
    <property type="match status" value="1"/>
</dbReference>
<dbReference type="InterPro" id="IPR050092">
    <property type="entry name" value="RNase_H"/>
</dbReference>
<dbReference type="InterPro" id="IPR012337">
    <property type="entry name" value="RNaseH-like_sf"/>
</dbReference>
<dbReference type="InterPro" id="IPR002156">
    <property type="entry name" value="RNaseH_domain"/>
</dbReference>
<dbReference type="InterPro" id="IPR036397">
    <property type="entry name" value="RNaseH_sf"/>
</dbReference>
<dbReference type="InterPro" id="IPR022892">
    <property type="entry name" value="RNaseHI"/>
</dbReference>
<dbReference type="NCBIfam" id="NF001236">
    <property type="entry name" value="PRK00203.1"/>
    <property type="match status" value="1"/>
</dbReference>
<dbReference type="PANTHER" id="PTHR10642">
    <property type="entry name" value="RIBONUCLEASE H1"/>
    <property type="match status" value="1"/>
</dbReference>
<dbReference type="PANTHER" id="PTHR10642:SF26">
    <property type="entry name" value="RIBONUCLEASE H1"/>
    <property type="match status" value="1"/>
</dbReference>
<dbReference type="Pfam" id="PF00075">
    <property type="entry name" value="RNase_H"/>
    <property type="match status" value="1"/>
</dbReference>
<dbReference type="SUPFAM" id="SSF53098">
    <property type="entry name" value="Ribonuclease H-like"/>
    <property type="match status" value="1"/>
</dbReference>
<dbReference type="PROSITE" id="PS50879">
    <property type="entry name" value="RNASE_H_1"/>
    <property type="match status" value="1"/>
</dbReference>
<reference key="1">
    <citation type="submission" date="2007-11" db="EMBL/GenBank/DDBJ databases">
        <title>Complete sequence of chromosome of Shewanella baltica OS195.</title>
        <authorList>
            <consortium name="US DOE Joint Genome Institute"/>
            <person name="Copeland A."/>
            <person name="Lucas S."/>
            <person name="Lapidus A."/>
            <person name="Barry K."/>
            <person name="Glavina del Rio T."/>
            <person name="Dalin E."/>
            <person name="Tice H."/>
            <person name="Pitluck S."/>
            <person name="Chain P."/>
            <person name="Malfatti S."/>
            <person name="Shin M."/>
            <person name="Vergez L."/>
            <person name="Schmutz J."/>
            <person name="Larimer F."/>
            <person name="Land M."/>
            <person name="Hauser L."/>
            <person name="Kyrpides N."/>
            <person name="Kim E."/>
            <person name="Brettar I."/>
            <person name="Rodrigues J."/>
            <person name="Konstantinidis K."/>
            <person name="Klappenbach J."/>
            <person name="Hofle M."/>
            <person name="Tiedje J."/>
            <person name="Richardson P."/>
        </authorList>
    </citation>
    <scope>NUCLEOTIDE SEQUENCE [LARGE SCALE GENOMIC DNA]</scope>
    <source>
        <strain>OS195</strain>
    </source>
</reference>
<organism>
    <name type="scientific">Shewanella baltica (strain OS195)</name>
    <dbReference type="NCBI Taxonomy" id="399599"/>
    <lineage>
        <taxon>Bacteria</taxon>
        <taxon>Pseudomonadati</taxon>
        <taxon>Pseudomonadota</taxon>
        <taxon>Gammaproteobacteria</taxon>
        <taxon>Alteromonadales</taxon>
        <taxon>Shewanellaceae</taxon>
        <taxon>Shewanella</taxon>
    </lineage>
</organism>
<protein>
    <recommendedName>
        <fullName evidence="1">Ribonuclease H</fullName>
        <shortName evidence="1">RNase H</shortName>
        <ecNumber evidence="1">3.1.26.4</ecNumber>
    </recommendedName>
</protein>
<evidence type="ECO:0000255" key="1">
    <source>
        <dbReference type="HAMAP-Rule" id="MF_00042"/>
    </source>
</evidence>
<evidence type="ECO:0000255" key="2">
    <source>
        <dbReference type="PROSITE-ProRule" id="PRU00408"/>
    </source>
</evidence>
<gene>
    <name evidence="1" type="primary">rnhA</name>
    <name type="ordered locus">Sbal195_2062</name>
</gene>
<accession>A9L0F2</accession>